<evidence type="ECO:0000255" key="1">
    <source>
        <dbReference type="HAMAP-Rule" id="MF_01338"/>
    </source>
</evidence>
<dbReference type="EC" id="4.1.1.39" evidence="1"/>
<dbReference type="EMBL" id="L01898">
    <property type="protein sequence ID" value="AAA84160.2"/>
    <property type="molecule type" value="Genomic_DNA"/>
</dbReference>
<dbReference type="EMBL" id="L11213">
    <property type="protein sequence ID" value="AAA84162.2"/>
    <property type="molecule type" value="Genomic_DNA"/>
</dbReference>
<dbReference type="SMR" id="P28393"/>
<dbReference type="GO" id="GO:0009507">
    <property type="term" value="C:chloroplast"/>
    <property type="evidence" value="ECO:0007669"/>
    <property type="project" value="UniProtKB-SubCell"/>
</dbReference>
<dbReference type="GO" id="GO:0000287">
    <property type="term" value="F:magnesium ion binding"/>
    <property type="evidence" value="ECO:0007669"/>
    <property type="project" value="InterPro"/>
</dbReference>
<dbReference type="GO" id="GO:0004497">
    <property type="term" value="F:monooxygenase activity"/>
    <property type="evidence" value="ECO:0007669"/>
    <property type="project" value="UniProtKB-KW"/>
</dbReference>
<dbReference type="GO" id="GO:0016984">
    <property type="term" value="F:ribulose-bisphosphate carboxylase activity"/>
    <property type="evidence" value="ECO:0007669"/>
    <property type="project" value="UniProtKB-EC"/>
</dbReference>
<dbReference type="GO" id="GO:0009853">
    <property type="term" value="P:photorespiration"/>
    <property type="evidence" value="ECO:0007669"/>
    <property type="project" value="UniProtKB-KW"/>
</dbReference>
<dbReference type="GO" id="GO:0019253">
    <property type="term" value="P:reductive pentose-phosphate cycle"/>
    <property type="evidence" value="ECO:0007669"/>
    <property type="project" value="UniProtKB-KW"/>
</dbReference>
<dbReference type="CDD" id="cd08212">
    <property type="entry name" value="RuBisCO_large_I"/>
    <property type="match status" value="1"/>
</dbReference>
<dbReference type="FunFam" id="3.20.20.110:FF:000001">
    <property type="entry name" value="Ribulose bisphosphate carboxylase large chain"/>
    <property type="match status" value="1"/>
</dbReference>
<dbReference type="FunFam" id="3.30.70.150:FF:000001">
    <property type="entry name" value="Ribulose bisphosphate carboxylase large chain"/>
    <property type="match status" value="1"/>
</dbReference>
<dbReference type="Gene3D" id="3.20.20.110">
    <property type="entry name" value="Ribulose bisphosphate carboxylase, large subunit, C-terminal domain"/>
    <property type="match status" value="1"/>
</dbReference>
<dbReference type="Gene3D" id="3.30.70.150">
    <property type="entry name" value="RuBisCO large subunit, N-terminal domain"/>
    <property type="match status" value="1"/>
</dbReference>
<dbReference type="HAMAP" id="MF_01338">
    <property type="entry name" value="RuBisCO_L_type1"/>
    <property type="match status" value="1"/>
</dbReference>
<dbReference type="InterPro" id="IPR033966">
    <property type="entry name" value="RuBisCO"/>
</dbReference>
<dbReference type="InterPro" id="IPR020878">
    <property type="entry name" value="RuBisCo_large_chain_AS"/>
</dbReference>
<dbReference type="InterPro" id="IPR000685">
    <property type="entry name" value="RuBisCO_lsu_C"/>
</dbReference>
<dbReference type="InterPro" id="IPR036376">
    <property type="entry name" value="RuBisCO_lsu_C_sf"/>
</dbReference>
<dbReference type="InterPro" id="IPR017443">
    <property type="entry name" value="RuBisCO_lsu_fd_N"/>
</dbReference>
<dbReference type="InterPro" id="IPR036422">
    <property type="entry name" value="RuBisCO_lsu_N_sf"/>
</dbReference>
<dbReference type="InterPro" id="IPR020888">
    <property type="entry name" value="RuBisCO_lsuI"/>
</dbReference>
<dbReference type="NCBIfam" id="NF003252">
    <property type="entry name" value="PRK04208.1"/>
    <property type="match status" value="1"/>
</dbReference>
<dbReference type="PANTHER" id="PTHR42704">
    <property type="entry name" value="RIBULOSE BISPHOSPHATE CARBOXYLASE"/>
    <property type="match status" value="1"/>
</dbReference>
<dbReference type="PANTHER" id="PTHR42704:SF15">
    <property type="entry name" value="RIBULOSE BISPHOSPHATE CARBOXYLASE LARGE CHAIN"/>
    <property type="match status" value="1"/>
</dbReference>
<dbReference type="Pfam" id="PF00016">
    <property type="entry name" value="RuBisCO_large"/>
    <property type="match status" value="1"/>
</dbReference>
<dbReference type="Pfam" id="PF02788">
    <property type="entry name" value="RuBisCO_large_N"/>
    <property type="match status" value="1"/>
</dbReference>
<dbReference type="SFLD" id="SFLDG01052">
    <property type="entry name" value="RuBisCO"/>
    <property type="match status" value="1"/>
</dbReference>
<dbReference type="SFLD" id="SFLDS00014">
    <property type="entry name" value="RuBisCO"/>
    <property type="match status" value="1"/>
</dbReference>
<dbReference type="SFLD" id="SFLDG00301">
    <property type="entry name" value="RuBisCO-like_proteins"/>
    <property type="match status" value="1"/>
</dbReference>
<dbReference type="SUPFAM" id="SSF51649">
    <property type="entry name" value="RuBisCo, C-terminal domain"/>
    <property type="match status" value="1"/>
</dbReference>
<dbReference type="SUPFAM" id="SSF54966">
    <property type="entry name" value="RuBisCO, large subunit, small (N-terminal) domain"/>
    <property type="match status" value="1"/>
</dbReference>
<dbReference type="PROSITE" id="PS00157">
    <property type="entry name" value="RUBISCO_LARGE"/>
    <property type="match status" value="1"/>
</dbReference>
<feature type="chain" id="PRO_0000062417" description="Ribulose bisphosphate carboxylase large chain">
    <location>
        <begin position="1" status="less than"/>
        <end position="465"/>
    </location>
</feature>
<feature type="active site" description="Proton acceptor" evidence="1">
    <location>
        <position position="165"/>
    </location>
</feature>
<feature type="active site" description="Proton acceptor" evidence="1">
    <location>
        <position position="284"/>
    </location>
</feature>
<feature type="binding site" description="in homodimeric partner" evidence="1">
    <location>
        <position position="113"/>
    </location>
    <ligand>
        <name>substrate</name>
    </ligand>
</feature>
<feature type="binding site" evidence="1">
    <location>
        <position position="163"/>
    </location>
    <ligand>
        <name>substrate</name>
    </ligand>
</feature>
<feature type="binding site" evidence="1">
    <location>
        <position position="167"/>
    </location>
    <ligand>
        <name>substrate</name>
    </ligand>
</feature>
<feature type="binding site" description="via carbamate group" evidence="1">
    <location>
        <position position="191"/>
    </location>
    <ligand>
        <name>Mg(2+)</name>
        <dbReference type="ChEBI" id="CHEBI:18420"/>
    </ligand>
</feature>
<feature type="binding site" evidence="1">
    <location>
        <position position="193"/>
    </location>
    <ligand>
        <name>Mg(2+)</name>
        <dbReference type="ChEBI" id="CHEBI:18420"/>
    </ligand>
</feature>
<feature type="binding site" evidence="1">
    <location>
        <position position="194"/>
    </location>
    <ligand>
        <name>Mg(2+)</name>
        <dbReference type="ChEBI" id="CHEBI:18420"/>
    </ligand>
</feature>
<feature type="binding site" evidence="1">
    <location>
        <position position="285"/>
    </location>
    <ligand>
        <name>substrate</name>
    </ligand>
</feature>
<feature type="binding site" evidence="1">
    <location>
        <position position="317"/>
    </location>
    <ligand>
        <name>substrate</name>
    </ligand>
</feature>
<feature type="binding site" evidence="1">
    <location>
        <position position="369"/>
    </location>
    <ligand>
        <name>substrate</name>
    </ligand>
</feature>
<feature type="site" description="Transition state stabilizer" evidence="1">
    <location>
        <position position="324"/>
    </location>
</feature>
<feature type="modified residue" description="N6,N6,N6-trimethyllysine" evidence="1">
    <location>
        <position position="4"/>
    </location>
</feature>
<feature type="modified residue" description="N6-carboxylysine" evidence="1">
    <location>
        <position position="191"/>
    </location>
</feature>
<feature type="disulfide bond" description="Interchain; in linked form" evidence="1">
    <location>
        <position position="237"/>
    </location>
</feature>
<feature type="non-terminal residue">
    <location>
        <position position="1"/>
    </location>
</feature>
<sequence>VGFKAGVKEYKLTYYTPTYETKDTDILAAFRVTPQPGVPPEEAGAAVAAESSTGTWTTVWTDGLTSLDRYKGRCYHIEPVAGEESQFIAYVAYPLDLFEEGSVTNMFTSIVGNVFGFKALRALRLEDLRIPVAYVKTFQGPPHGIQVERDKLNKYGRPLLGCTIKPKLGLSAKNYGRAVYECLRGGLDFTKDDENVNSQPFMRWRDRFLFCAEANYKSQAETGEIKGHYLNATAGTCEEMMKRAVFARELGVPIVMHDYLTGGFTANTSLAHYCRDNGLLLHIHRAMHAVIDRQKNHGIHFRVLAKALRMSGGDHIHSGTVVGKLEGERDITLGFVDLLRDDFVEKDRSRGIYFTQDWVSLPGVLPVASGGIHVWHMPALTEIFGDDSVLQFGGGTLGHPWGKPPGAVANRVALEACVQARNEGRDLAREGNEIIREASKWSPELAAACEVWKEIKFEFEAMDTL</sequence>
<protein>
    <recommendedName>
        <fullName evidence="1">Ribulose bisphosphate carboxylase large chain</fullName>
        <shortName evidence="1">RuBisCO large subunit</shortName>
        <ecNumber evidence="1">4.1.1.39</ecNumber>
    </recommendedName>
</protein>
<name>RBL_CORCA</name>
<accession>P28393</accession>
<proteinExistence type="inferred from homology"/>
<organism>
    <name type="scientific">Cornus canadensis</name>
    <name type="common">Bunchberry dogwood</name>
    <name type="synonym">Chamaepericlymenum canadense</name>
    <dbReference type="NCBI Taxonomy" id="4282"/>
    <lineage>
        <taxon>Eukaryota</taxon>
        <taxon>Viridiplantae</taxon>
        <taxon>Streptophyta</taxon>
        <taxon>Embryophyta</taxon>
        <taxon>Tracheophyta</taxon>
        <taxon>Spermatophyta</taxon>
        <taxon>Magnoliopsida</taxon>
        <taxon>eudicotyledons</taxon>
        <taxon>Gunneridae</taxon>
        <taxon>Pentapetalae</taxon>
        <taxon>asterids</taxon>
        <taxon>Cornales</taxon>
        <taxon>Cornaceae</taxon>
        <taxon>Cornus</taxon>
    </lineage>
</organism>
<comment type="function">
    <text evidence="1">RuBisCO catalyzes two reactions: the carboxylation of D-ribulose 1,5-bisphosphate, the primary event in carbon dioxide fixation, as well as the oxidative fragmentation of the pentose substrate in the photorespiration process. Both reactions occur simultaneously and in competition at the same active site.</text>
</comment>
<comment type="catalytic activity">
    <reaction evidence="1">
        <text>2 (2R)-3-phosphoglycerate + 2 H(+) = D-ribulose 1,5-bisphosphate + CO2 + H2O</text>
        <dbReference type="Rhea" id="RHEA:23124"/>
        <dbReference type="ChEBI" id="CHEBI:15377"/>
        <dbReference type="ChEBI" id="CHEBI:15378"/>
        <dbReference type="ChEBI" id="CHEBI:16526"/>
        <dbReference type="ChEBI" id="CHEBI:57870"/>
        <dbReference type="ChEBI" id="CHEBI:58272"/>
        <dbReference type="EC" id="4.1.1.39"/>
    </reaction>
</comment>
<comment type="catalytic activity">
    <reaction evidence="1">
        <text>D-ribulose 1,5-bisphosphate + O2 = 2-phosphoglycolate + (2R)-3-phosphoglycerate + 2 H(+)</text>
        <dbReference type="Rhea" id="RHEA:36631"/>
        <dbReference type="ChEBI" id="CHEBI:15378"/>
        <dbReference type="ChEBI" id="CHEBI:15379"/>
        <dbReference type="ChEBI" id="CHEBI:57870"/>
        <dbReference type="ChEBI" id="CHEBI:58033"/>
        <dbReference type="ChEBI" id="CHEBI:58272"/>
    </reaction>
</comment>
<comment type="cofactor">
    <cofactor evidence="1">
        <name>Mg(2+)</name>
        <dbReference type="ChEBI" id="CHEBI:18420"/>
    </cofactor>
    <text evidence="1">Binds 1 Mg(2+) ion per subunit.</text>
</comment>
<comment type="subunit">
    <text evidence="1">Heterohexadecamer of 8 large chains and 8 small chains; disulfide-linked. The disulfide link is formed within the large subunit homodimers.</text>
</comment>
<comment type="subcellular location">
    <subcellularLocation>
        <location>Plastid</location>
        <location>Chloroplast</location>
    </subcellularLocation>
</comment>
<comment type="PTM">
    <text evidence="1">The disulfide bond which can form in the large chain dimeric partners within the hexadecamer appears to be associated with oxidative stress and protein turnover.</text>
</comment>
<comment type="miscellaneous">
    <text evidence="1">The basic functional RuBisCO is composed of a large chain homodimer in a 'head-to-tail' conformation. In form I RuBisCO this homodimer is arranged in a barrel-like tetramer with the small subunits forming a tetrameric 'cap' on each end of the 'barrel'.</text>
</comment>
<comment type="similarity">
    <text evidence="1">Belongs to the RuBisCO large chain family. Type I subfamily.</text>
</comment>
<reference key="1">
    <citation type="journal article" date="1993" name="Ann. Mo. Bot. Gard.">
        <title>Phylogenetic relationships of Cornus L. sensu lato and putative relatives inferred from rbcL sequence data.</title>
        <authorList>
            <person name="Xiang Q.-Y."/>
            <person name="Soltis D.E."/>
            <person name="Morgan D.R."/>
            <person name="Soltis P.S."/>
        </authorList>
        <dbReference type="AGRICOLA" id="IND93053817"/>
    </citation>
    <scope>NUCLEOTIDE SEQUENCE [GENOMIC DNA]</scope>
    <source>
        <tissue>Leaf</tissue>
    </source>
</reference>
<reference key="2">
    <citation type="journal article" date="1990" name="Proc. Natl. Acad. Sci. U.S.A.">
        <title>rbcL sequence divergence and phylogenetic relationships in Saxifragaceae sensu lato.</title>
        <authorList>
            <person name="Soltis D.E."/>
            <person name="Soltis P.S."/>
            <person name="Clegg M.T."/>
            <person name="Durbin M."/>
        </authorList>
    </citation>
    <scope>NUCLEOTIDE SEQUENCE [GENOMIC DNA] OF 1-459</scope>
</reference>
<reference key="3">
    <citation type="journal article" date="1992" name="Science">
        <title>Carnivorous plants: phylogeny and structural evolution.</title>
        <authorList>
            <person name="Albert V.A."/>
            <person name="Williams S.E."/>
            <person name="Chase M.W."/>
        </authorList>
    </citation>
    <scope>NUCLEOTIDE SEQUENCE [GENOMIC DNA] OF 1-459</scope>
</reference>
<geneLocation type="chloroplast"/>
<keyword id="KW-0113">Calvin cycle</keyword>
<keyword id="KW-0120">Carbon dioxide fixation</keyword>
<keyword id="KW-0150">Chloroplast</keyword>
<keyword id="KW-1015">Disulfide bond</keyword>
<keyword id="KW-0456">Lyase</keyword>
<keyword id="KW-0460">Magnesium</keyword>
<keyword id="KW-0479">Metal-binding</keyword>
<keyword id="KW-0488">Methylation</keyword>
<keyword id="KW-0503">Monooxygenase</keyword>
<keyword id="KW-0560">Oxidoreductase</keyword>
<keyword id="KW-0601">Photorespiration</keyword>
<keyword id="KW-0602">Photosynthesis</keyword>
<keyword id="KW-0934">Plastid</keyword>
<gene>
    <name evidence="1" type="primary">rbcL</name>
</gene>